<organism>
    <name type="scientific">Homo sapiens</name>
    <name type="common">Human</name>
    <dbReference type="NCBI Taxonomy" id="9606"/>
    <lineage>
        <taxon>Eukaryota</taxon>
        <taxon>Metazoa</taxon>
        <taxon>Chordata</taxon>
        <taxon>Craniata</taxon>
        <taxon>Vertebrata</taxon>
        <taxon>Euteleostomi</taxon>
        <taxon>Mammalia</taxon>
        <taxon>Eutheria</taxon>
        <taxon>Euarchontoglires</taxon>
        <taxon>Primates</taxon>
        <taxon>Haplorrhini</taxon>
        <taxon>Catarrhini</taxon>
        <taxon>Hominidae</taxon>
        <taxon>Homo</taxon>
    </lineage>
</organism>
<evidence type="ECO:0000250" key="1"/>
<evidence type="ECO:0000250" key="2">
    <source>
        <dbReference type="UniProtKB" id="P40936"/>
    </source>
</evidence>
<evidence type="ECO:0000269" key="3">
    <source>
    </source>
</evidence>
<evidence type="ECO:0000269" key="4">
    <source>
    </source>
</evidence>
<evidence type="ECO:0000269" key="5">
    <source>
    </source>
</evidence>
<evidence type="ECO:0000303" key="6">
    <source>
    </source>
</evidence>
<evidence type="ECO:0000305" key="7"/>
<evidence type="ECO:0007829" key="8">
    <source>
        <dbReference type="PDB" id="2A14"/>
    </source>
</evidence>
<accession>O95050</accession>
<accession>B8ZZ69</accession>
<accession>Q3KP49</accession>
<accession>Q9P1Y2</accession>
<accession>Q9UBY4</accession>
<accession>Q9UHQ0</accession>
<proteinExistence type="evidence at protein level"/>
<name>INMT_HUMAN</name>
<comment type="function">
    <text evidence="1 3">Functions as a thioether S-methyltransferase and is active with a variety of thioethers and the corresponding selenium and tellurium compounds, including 3-methylthiopropionaldehyde, dimethyl selenide, dimethyl telluride, 2-methylthioethylamine, 2-methylthioethanol, methyl-n-propyl sulfide and diethyl sulfide. Plays an important role in the detoxification of selenium compounds (By similarity). Catalyzes the N-methylation of tryptamine and structurally related compounds.</text>
</comment>
<comment type="catalytic activity">
    <reaction evidence="3">
        <text>a tertiary amine + S-adenosyl-L-methionine = a methylated tertiary amine + S-adenosyl-L-homocysteine + H(+)</text>
        <dbReference type="Rhea" id="RHEA:53928"/>
        <dbReference type="ChEBI" id="CHEBI:15378"/>
        <dbReference type="ChEBI" id="CHEBI:57856"/>
        <dbReference type="ChEBI" id="CHEBI:59789"/>
        <dbReference type="ChEBI" id="CHEBI:137982"/>
        <dbReference type="ChEBI" id="CHEBI:137983"/>
        <dbReference type="EC" id="2.1.1.49"/>
    </reaction>
</comment>
<comment type="catalytic activity">
    <reaction evidence="3">
        <text>a secondary amine + S-adenosyl-L-methionine = a methylated secondary amine + S-adenosyl-L-homocysteine + H(+)</text>
        <dbReference type="Rhea" id="RHEA:53924"/>
        <dbReference type="ChEBI" id="CHEBI:15378"/>
        <dbReference type="ChEBI" id="CHEBI:57856"/>
        <dbReference type="ChEBI" id="CHEBI:59789"/>
        <dbReference type="ChEBI" id="CHEBI:137419"/>
        <dbReference type="ChEBI" id="CHEBI:137984"/>
        <dbReference type="EC" id="2.1.1.49"/>
    </reaction>
</comment>
<comment type="catalytic activity">
    <reaction evidence="3">
        <text>a primary amine + S-adenosyl-L-methionine = a methylated primary amine + S-adenosyl-L-homocysteine + H(+)</text>
        <dbReference type="Rhea" id="RHEA:23136"/>
        <dbReference type="ChEBI" id="CHEBI:15378"/>
        <dbReference type="ChEBI" id="CHEBI:57856"/>
        <dbReference type="ChEBI" id="CHEBI:59789"/>
        <dbReference type="ChEBI" id="CHEBI:65296"/>
        <dbReference type="ChEBI" id="CHEBI:131823"/>
        <dbReference type="EC" id="2.1.1.49"/>
    </reaction>
</comment>
<comment type="catalytic activity">
    <reaction evidence="3">
        <text>dimethyl sulfide + S-adenosyl-L-methionine = trimethylsulfonium + S-adenosyl-L-homocysteine</text>
        <dbReference type="Rhea" id="RHEA:19613"/>
        <dbReference type="ChEBI" id="CHEBI:17434"/>
        <dbReference type="ChEBI" id="CHEBI:17437"/>
        <dbReference type="ChEBI" id="CHEBI:57856"/>
        <dbReference type="ChEBI" id="CHEBI:59789"/>
        <dbReference type="EC" id="2.1.1.96"/>
    </reaction>
</comment>
<comment type="biophysicochemical properties">
    <kinetics>
        <KM evidence="3">2.9 mM for tryptamine</KM>
    </kinetics>
</comment>
<comment type="subunit">
    <text evidence="1">Monomer.</text>
</comment>
<comment type="interaction">
    <interactant intactId="EBI-10191038">
        <id>O95050</id>
    </interactant>
    <interactant intactId="EBI-740929">
        <id>Q53G59</id>
        <label>KLHL12</label>
    </interactant>
    <organismsDiffer>false</organismsDiffer>
    <experiments>6</experiments>
</comment>
<comment type="subcellular location">
    <subcellularLocation>
        <location evidence="1">Cytoplasm</location>
    </subcellularLocation>
</comment>
<comment type="alternative products">
    <event type="alternative splicing"/>
    <isoform>
        <id>O95050-1</id>
        <name>1</name>
        <sequence type="displayed"/>
    </isoform>
    <isoform>
        <id>O95050-2</id>
        <name>2</name>
        <sequence type="described" ref="VSP_045922"/>
    </isoform>
</comment>
<comment type="tissue specificity">
    <text evidence="3">Widely expressed. The highest levels were in thyroid, adrenal gland, adult and fetal lung. Intermediate levels in heart, placenta, skeletal muscle, testis, small intestine, pancreas, stomach, spinal cord, lymph node and trachea. Very low levels in adult and fetal kidney and liver, in adult spleen, thymus, ovary, colon and bone marrow. Not expressed in peripheral blood leukocytes and brain.</text>
</comment>
<comment type="similarity">
    <text evidence="7">Belongs to the class I-like SAM-binding methyltransferase superfamily. NNMT/PNMT/TEMT family.</text>
</comment>
<gene>
    <name type="primary">INMT</name>
</gene>
<keyword id="KW-0002">3D-structure</keyword>
<keyword id="KW-0025">Alternative splicing</keyword>
<keyword id="KW-0963">Cytoplasm</keyword>
<keyword id="KW-0216">Detoxification</keyword>
<keyword id="KW-0489">Methyltransferase</keyword>
<keyword id="KW-1267">Proteomics identification</keyword>
<keyword id="KW-1185">Reference proteome</keyword>
<keyword id="KW-0949">S-adenosyl-L-methionine</keyword>
<keyword id="KW-0808">Transferase</keyword>
<sequence length="263" mass="28891">MKGGFTGGDEYQKHFLPRDYLATYYSFDGSPSPEAEMLKFNLECLHKTFGPGGLQGDTLIDIGSGPTIYQVLAACDSFQDITLSDFTDRNREELEKWLKKEPGAYDWTPAVKFACELEGNSGRWEEKEEKLRAAVKRVLKCDVHLGNPLAPAVLPLADCVLTLLAMECACCSLDAYRAALCNLASLLKPGGHLVTTVTLRLPSYMVGKREFSCVALEKEEVEQAVLDAGFDIEQLLHSPQSYSVTNAANNGVCFIVARKKPGP</sequence>
<protein>
    <recommendedName>
        <fullName>Indolethylamine N-methyltransferase</fullName>
        <shortName>Indolamine N-methyltransferase</shortName>
        <ecNumber>2.1.1.49</ecNumber>
        <ecNumber>2.1.1.96</ecNumber>
    </recommendedName>
    <alternativeName>
        <fullName>Aromatic alkylamine N-methyltransferase</fullName>
        <shortName>Amine N-methyltransferase</shortName>
        <shortName>Arylamine N-methyltransferase</shortName>
    </alternativeName>
    <alternativeName>
        <fullName>Thioether S-methyltransferase</fullName>
        <shortName>TEMT</shortName>
    </alternativeName>
</protein>
<reference key="1">
    <citation type="journal article" date="1999" name="Genomics">
        <title>Human indolethylamine N-methyltransferase: cDNA cloning and expression, gene cloning, and chromosomal localization.</title>
        <authorList>
            <person name="Thompson M.A."/>
            <person name="Moon E."/>
            <person name="Kim U.-J."/>
            <person name="Xu J."/>
            <person name="Siciliano M.J."/>
            <person name="Weinshilboum R.M."/>
        </authorList>
    </citation>
    <scope>NUCLEOTIDE SEQUENCE [GENOMIC DNA / MRNA] (ISOFORM 1)</scope>
    <scope>VARIANTS VAL-205 AND GLY-219</scope>
    <scope>CATALYTIC ACTIVITY</scope>
    <scope>FUNCTION</scope>
    <scope>TISSUE SPECIFICITY</scope>
    <scope>BIOPHYSICOCHEMICAL PROPERTIES</scope>
    <source>
        <tissue>Placenta</tissue>
        <tissue>Skeletal muscle</tissue>
    </source>
</reference>
<reference key="2">
    <citation type="journal article" date="2004" name="Nat. Genet.">
        <title>Complete sequencing and characterization of 21,243 full-length human cDNAs.</title>
        <authorList>
            <person name="Ota T."/>
            <person name="Suzuki Y."/>
            <person name="Nishikawa T."/>
            <person name="Otsuki T."/>
            <person name="Sugiyama T."/>
            <person name="Irie R."/>
            <person name="Wakamatsu A."/>
            <person name="Hayashi K."/>
            <person name="Sato H."/>
            <person name="Nagai K."/>
            <person name="Kimura K."/>
            <person name="Makita H."/>
            <person name="Sekine M."/>
            <person name="Obayashi M."/>
            <person name="Nishi T."/>
            <person name="Shibahara T."/>
            <person name="Tanaka T."/>
            <person name="Ishii S."/>
            <person name="Yamamoto J."/>
            <person name="Saito K."/>
            <person name="Kawai Y."/>
            <person name="Isono Y."/>
            <person name="Nakamura Y."/>
            <person name="Nagahari K."/>
            <person name="Murakami K."/>
            <person name="Yasuda T."/>
            <person name="Iwayanagi T."/>
            <person name="Wagatsuma M."/>
            <person name="Shiratori A."/>
            <person name="Sudo H."/>
            <person name="Hosoiri T."/>
            <person name="Kaku Y."/>
            <person name="Kodaira H."/>
            <person name="Kondo H."/>
            <person name="Sugawara M."/>
            <person name="Takahashi M."/>
            <person name="Kanda K."/>
            <person name="Yokoi T."/>
            <person name="Furuya T."/>
            <person name="Kikkawa E."/>
            <person name="Omura Y."/>
            <person name="Abe K."/>
            <person name="Kamihara K."/>
            <person name="Katsuta N."/>
            <person name="Sato K."/>
            <person name="Tanikawa M."/>
            <person name="Yamazaki M."/>
            <person name="Ninomiya K."/>
            <person name="Ishibashi T."/>
            <person name="Yamashita H."/>
            <person name="Murakawa K."/>
            <person name="Fujimori K."/>
            <person name="Tanai H."/>
            <person name="Kimata M."/>
            <person name="Watanabe M."/>
            <person name="Hiraoka S."/>
            <person name="Chiba Y."/>
            <person name="Ishida S."/>
            <person name="Ono Y."/>
            <person name="Takiguchi S."/>
            <person name="Watanabe S."/>
            <person name="Yosida M."/>
            <person name="Hotuta T."/>
            <person name="Kusano J."/>
            <person name="Kanehori K."/>
            <person name="Takahashi-Fujii A."/>
            <person name="Hara H."/>
            <person name="Tanase T.-O."/>
            <person name="Nomura Y."/>
            <person name="Togiya S."/>
            <person name="Komai F."/>
            <person name="Hara R."/>
            <person name="Takeuchi K."/>
            <person name="Arita M."/>
            <person name="Imose N."/>
            <person name="Musashino K."/>
            <person name="Yuuki H."/>
            <person name="Oshima A."/>
            <person name="Sasaki N."/>
            <person name="Aotsuka S."/>
            <person name="Yoshikawa Y."/>
            <person name="Matsunawa H."/>
            <person name="Ichihara T."/>
            <person name="Shiohata N."/>
            <person name="Sano S."/>
            <person name="Moriya S."/>
            <person name="Momiyama H."/>
            <person name="Satoh N."/>
            <person name="Takami S."/>
            <person name="Terashima Y."/>
            <person name="Suzuki O."/>
            <person name="Nakagawa S."/>
            <person name="Senoh A."/>
            <person name="Mizoguchi H."/>
            <person name="Goto Y."/>
            <person name="Shimizu F."/>
            <person name="Wakebe H."/>
            <person name="Hishigaki H."/>
            <person name="Watanabe T."/>
            <person name="Sugiyama A."/>
            <person name="Takemoto M."/>
            <person name="Kawakami B."/>
            <person name="Yamazaki M."/>
            <person name="Watanabe K."/>
            <person name="Kumagai A."/>
            <person name="Itakura S."/>
            <person name="Fukuzumi Y."/>
            <person name="Fujimori Y."/>
            <person name="Komiyama M."/>
            <person name="Tashiro H."/>
            <person name="Tanigami A."/>
            <person name="Fujiwara T."/>
            <person name="Ono T."/>
            <person name="Yamada K."/>
            <person name="Fujii Y."/>
            <person name="Ozaki K."/>
            <person name="Hirao M."/>
            <person name="Ohmori Y."/>
            <person name="Kawabata A."/>
            <person name="Hikiji T."/>
            <person name="Kobatake N."/>
            <person name="Inagaki H."/>
            <person name="Ikema Y."/>
            <person name="Okamoto S."/>
            <person name="Okitani R."/>
            <person name="Kawakami T."/>
            <person name="Noguchi S."/>
            <person name="Itoh T."/>
            <person name="Shigeta K."/>
            <person name="Senba T."/>
            <person name="Matsumura K."/>
            <person name="Nakajima Y."/>
            <person name="Mizuno T."/>
            <person name="Morinaga M."/>
            <person name="Sasaki M."/>
            <person name="Togashi T."/>
            <person name="Oyama M."/>
            <person name="Hata H."/>
            <person name="Watanabe M."/>
            <person name="Komatsu T."/>
            <person name="Mizushima-Sugano J."/>
            <person name="Satoh T."/>
            <person name="Shirai Y."/>
            <person name="Takahashi Y."/>
            <person name="Nakagawa K."/>
            <person name="Okumura K."/>
            <person name="Nagase T."/>
            <person name="Nomura N."/>
            <person name="Kikuchi H."/>
            <person name="Masuho Y."/>
            <person name="Yamashita R."/>
            <person name="Nakai K."/>
            <person name="Yada T."/>
            <person name="Nakamura Y."/>
            <person name="Ohara O."/>
            <person name="Isogai T."/>
            <person name="Sugano S."/>
        </authorList>
    </citation>
    <scope>NUCLEOTIDE SEQUENCE [LARGE SCALE MRNA] (ISOFORM 2)</scope>
    <scope>VARIANTS GLY-219 AND CYS-254</scope>
    <source>
        <tissue>Lung</tissue>
    </source>
</reference>
<reference key="3">
    <citation type="journal article" date="2003" name="Nature">
        <title>The DNA sequence of human chromosome 7.</title>
        <authorList>
            <person name="Hillier L.W."/>
            <person name="Fulton R.S."/>
            <person name="Fulton L.A."/>
            <person name="Graves T.A."/>
            <person name="Pepin K.H."/>
            <person name="Wagner-McPherson C."/>
            <person name="Layman D."/>
            <person name="Maas J."/>
            <person name="Jaeger S."/>
            <person name="Walker R."/>
            <person name="Wylie K."/>
            <person name="Sekhon M."/>
            <person name="Becker M.C."/>
            <person name="O'Laughlin M.D."/>
            <person name="Schaller M.E."/>
            <person name="Fewell G.A."/>
            <person name="Delehaunty K.D."/>
            <person name="Miner T.L."/>
            <person name="Nash W.E."/>
            <person name="Cordes M."/>
            <person name="Du H."/>
            <person name="Sun H."/>
            <person name="Edwards J."/>
            <person name="Bradshaw-Cordum H."/>
            <person name="Ali J."/>
            <person name="Andrews S."/>
            <person name="Isak A."/>
            <person name="Vanbrunt A."/>
            <person name="Nguyen C."/>
            <person name="Du F."/>
            <person name="Lamar B."/>
            <person name="Courtney L."/>
            <person name="Kalicki J."/>
            <person name="Ozersky P."/>
            <person name="Bielicki L."/>
            <person name="Scott K."/>
            <person name="Holmes A."/>
            <person name="Harkins R."/>
            <person name="Harris A."/>
            <person name="Strong C.M."/>
            <person name="Hou S."/>
            <person name="Tomlinson C."/>
            <person name="Dauphin-Kohlberg S."/>
            <person name="Kozlowicz-Reilly A."/>
            <person name="Leonard S."/>
            <person name="Rohlfing T."/>
            <person name="Rock S.M."/>
            <person name="Tin-Wollam A.-M."/>
            <person name="Abbott A."/>
            <person name="Minx P."/>
            <person name="Maupin R."/>
            <person name="Strowmatt C."/>
            <person name="Latreille P."/>
            <person name="Miller N."/>
            <person name="Johnson D."/>
            <person name="Murray J."/>
            <person name="Woessner J.P."/>
            <person name="Wendl M.C."/>
            <person name="Yang S.-P."/>
            <person name="Schultz B.R."/>
            <person name="Wallis J.W."/>
            <person name="Spieth J."/>
            <person name="Bieri T.A."/>
            <person name="Nelson J.O."/>
            <person name="Berkowicz N."/>
            <person name="Wohldmann P.E."/>
            <person name="Cook L.L."/>
            <person name="Hickenbotham M.T."/>
            <person name="Eldred J."/>
            <person name="Williams D."/>
            <person name="Bedell J.A."/>
            <person name="Mardis E.R."/>
            <person name="Clifton S.W."/>
            <person name="Chissoe S.L."/>
            <person name="Marra M.A."/>
            <person name="Raymond C."/>
            <person name="Haugen E."/>
            <person name="Gillett W."/>
            <person name="Zhou Y."/>
            <person name="James R."/>
            <person name="Phelps K."/>
            <person name="Iadanoto S."/>
            <person name="Bubb K."/>
            <person name="Simms E."/>
            <person name="Levy R."/>
            <person name="Clendenning J."/>
            <person name="Kaul R."/>
            <person name="Kent W.J."/>
            <person name="Furey T.S."/>
            <person name="Baertsch R.A."/>
            <person name="Brent M.R."/>
            <person name="Keibler E."/>
            <person name="Flicek P."/>
            <person name="Bork P."/>
            <person name="Suyama M."/>
            <person name="Bailey J.A."/>
            <person name="Portnoy M.E."/>
            <person name="Torrents D."/>
            <person name="Chinwalla A.T."/>
            <person name="Gish W.R."/>
            <person name="Eddy S.R."/>
            <person name="McPherson J.D."/>
            <person name="Olson M.V."/>
            <person name="Eichler E.E."/>
            <person name="Green E.D."/>
            <person name="Waterston R.H."/>
            <person name="Wilson R.K."/>
        </authorList>
    </citation>
    <scope>NUCLEOTIDE SEQUENCE [LARGE SCALE GENOMIC DNA]</scope>
</reference>
<reference key="4">
    <citation type="journal article" date="2004" name="Genome Res.">
        <title>The status, quality, and expansion of the NIH full-length cDNA project: the Mammalian Gene Collection (MGC).</title>
        <authorList>
            <consortium name="The MGC Project Team"/>
        </authorList>
    </citation>
    <scope>NUCLEOTIDE SEQUENCE [LARGE SCALE MRNA] (ISOFORM 1)</scope>
    <scope>VARIANTS ASN-28 AND GLY-219</scope>
    <source>
        <tissue>Lung</tissue>
        <tissue>Spleen</tissue>
    </source>
</reference>
<reference key="5">
    <citation type="journal article" date="2004" name="Mol. Biol. Evol.">
        <title>Human-specific amino acid changes found in 103 protein-coding genes.</title>
        <authorList>
            <person name="Kitano T."/>
            <person name="Liu Y.-H."/>
            <person name="Ueda S."/>
            <person name="Saitou N."/>
        </authorList>
    </citation>
    <scope>NUCLEOTIDE SEQUENCE [GENOMIC DNA] OF 1-12</scope>
</reference>
<reference key="6">
    <citation type="submission" date="2005-06" db="PDB data bank">
        <title>The crystal structure of human indolethylamine N-methyltransferase in complex with SAH.</title>
        <authorList>
            <consortium name="Structural genomics consortium (SGC)"/>
        </authorList>
    </citation>
    <scope>X-RAY CRYSTALLOGRAPHY (1.7 ANGSTROMS) IN COMPLEX WITH S-ADENOSYL-L-HOMOCYSTEINE</scope>
</reference>
<feature type="chain" id="PRO_0000159712" description="Indolethylamine N-methyltransferase">
    <location>
        <begin position="1"/>
        <end position="263"/>
    </location>
</feature>
<feature type="binding site">
    <location>
        <position position="20"/>
    </location>
    <ligand>
        <name>S-adenosyl-L-methionine</name>
        <dbReference type="ChEBI" id="CHEBI:59789"/>
    </ligand>
</feature>
<feature type="binding site">
    <location>
        <position position="25"/>
    </location>
    <ligand>
        <name>S-adenosyl-L-methionine</name>
        <dbReference type="ChEBI" id="CHEBI:59789"/>
    </ligand>
</feature>
<feature type="binding site">
    <location>
        <position position="63"/>
    </location>
    <ligand>
        <name>S-adenosyl-L-methionine</name>
        <dbReference type="ChEBI" id="CHEBI:59789"/>
    </ligand>
</feature>
<feature type="binding site">
    <location>
        <position position="69"/>
    </location>
    <ligand>
        <name>S-adenosyl-L-methionine</name>
        <dbReference type="ChEBI" id="CHEBI:59789"/>
    </ligand>
</feature>
<feature type="binding site">
    <location>
        <begin position="85"/>
        <end position="87"/>
    </location>
    <ligand>
        <name>S-adenosyl-L-methionine</name>
        <dbReference type="ChEBI" id="CHEBI:59789"/>
    </ligand>
</feature>
<feature type="binding site">
    <location>
        <position position="90"/>
    </location>
    <ligand>
        <name>S-adenosyl-L-methionine</name>
        <dbReference type="ChEBI" id="CHEBI:59789"/>
    </ligand>
</feature>
<feature type="binding site">
    <location>
        <begin position="142"/>
        <end position="143"/>
    </location>
    <ligand>
        <name>S-adenosyl-L-methionine</name>
        <dbReference type="ChEBI" id="CHEBI:59789"/>
    </ligand>
</feature>
<feature type="binding site">
    <location>
        <position position="163"/>
    </location>
    <ligand>
        <name>S-adenosyl-L-methionine</name>
        <dbReference type="ChEBI" id="CHEBI:59789"/>
    </ligand>
</feature>
<feature type="modified residue" description="N6-succinyllysine" evidence="2">
    <location>
        <position position="13"/>
    </location>
</feature>
<feature type="modified residue" description="N6-succinyllysine" evidence="2">
    <location>
        <position position="96"/>
    </location>
</feature>
<feature type="splice variant" id="VSP_045922" description="In isoform 2." evidence="6">
    <location>
        <position position="52"/>
    </location>
</feature>
<feature type="sequence variant" id="VAR_036991" description="In dbSNP:rs4723010." evidence="5">
    <original>D</original>
    <variation>N</variation>
    <location>
        <position position="28"/>
    </location>
</feature>
<feature type="sequence variant" id="VAR_011616" description="In dbSNP:rs2302339." evidence="3">
    <original>M</original>
    <variation>V</variation>
    <location>
        <position position="205"/>
    </location>
</feature>
<feature type="sequence variant" id="VAR_061373" description="In dbSNP:rs56800285.">
    <original>V</original>
    <variation>M</variation>
    <location>
        <position position="214"/>
    </location>
</feature>
<feature type="sequence variant" id="VAR_011617" description="In dbSNP:rs2302340." evidence="3 4 5">
    <original>E</original>
    <variation>G</variation>
    <location>
        <position position="219"/>
    </location>
</feature>
<feature type="sequence variant" id="VAR_036992" description="In dbSNP:rs6970210.">
    <original>N</original>
    <variation>S</variation>
    <location>
        <position position="246"/>
    </location>
</feature>
<feature type="sequence variant" id="VAR_036993" description="In dbSNP:rs4720015." evidence="4">
    <original>F</original>
    <variation>C</variation>
    <location>
        <position position="254"/>
    </location>
</feature>
<feature type="sequence variant" id="VAR_036994" description="In dbSNP:rs6970605.">
    <original>R</original>
    <variation>H</variation>
    <location>
        <position position="258"/>
    </location>
</feature>
<feature type="sequence conflict" description="In Ref. 2; AK313832." evidence="7" ref="2">
    <original>C</original>
    <variation>F</variation>
    <location>
        <position position="75"/>
    </location>
</feature>
<feature type="helix" evidence="8">
    <location>
        <begin position="8"/>
        <end position="14"/>
    </location>
</feature>
<feature type="helix" evidence="8">
    <location>
        <begin position="17"/>
        <end position="24"/>
    </location>
</feature>
<feature type="helix" evidence="8">
    <location>
        <begin position="33"/>
        <end position="49"/>
    </location>
</feature>
<feature type="strand" evidence="8">
    <location>
        <begin position="56"/>
        <end position="63"/>
    </location>
</feature>
<feature type="helix" evidence="8">
    <location>
        <begin position="69"/>
        <end position="71"/>
    </location>
</feature>
<feature type="helix" evidence="8">
    <location>
        <begin position="74"/>
        <end position="76"/>
    </location>
</feature>
<feature type="strand" evidence="8">
    <location>
        <begin position="78"/>
        <end position="86"/>
    </location>
</feature>
<feature type="helix" evidence="8">
    <location>
        <begin position="88"/>
        <end position="99"/>
    </location>
</feature>
<feature type="helix" evidence="8">
    <location>
        <begin position="108"/>
        <end position="117"/>
    </location>
</feature>
<feature type="helix" evidence="8">
    <location>
        <begin position="121"/>
        <end position="123"/>
    </location>
</feature>
<feature type="helix" evidence="8">
    <location>
        <begin position="124"/>
        <end position="134"/>
    </location>
</feature>
<feature type="strand" evidence="8">
    <location>
        <begin position="135"/>
        <end position="140"/>
    </location>
</feature>
<feature type="strand" evidence="8">
    <location>
        <begin position="145"/>
        <end position="147"/>
    </location>
</feature>
<feature type="turn" evidence="8">
    <location>
        <begin position="148"/>
        <end position="151"/>
    </location>
</feature>
<feature type="strand" evidence="8">
    <location>
        <begin position="157"/>
        <end position="164"/>
    </location>
</feature>
<feature type="helix" evidence="8">
    <location>
        <begin position="166"/>
        <end position="169"/>
    </location>
</feature>
<feature type="helix" evidence="8">
    <location>
        <begin position="173"/>
        <end position="184"/>
    </location>
</feature>
<feature type="strand" evidence="8">
    <location>
        <begin position="187"/>
        <end position="200"/>
    </location>
</feature>
<feature type="strand" evidence="8">
    <location>
        <begin position="203"/>
        <end position="206"/>
    </location>
</feature>
<feature type="strand" evidence="8">
    <location>
        <begin position="209"/>
        <end position="212"/>
    </location>
</feature>
<feature type="helix" evidence="8">
    <location>
        <begin position="218"/>
        <end position="227"/>
    </location>
</feature>
<feature type="strand" evidence="8">
    <location>
        <begin position="230"/>
        <end position="238"/>
    </location>
</feature>
<feature type="turn" evidence="8">
    <location>
        <begin position="244"/>
        <end position="246"/>
    </location>
</feature>
<feature type="strand" evidence="8">
    <location>
        <begin position="252"/>
        <end position="259"/>
    </location>
</feature>
<dbReference type="EC" id="2.1.1.49"/>
<dbReference type="EC" id="2.1.1.96"/>
<dbReference type="EMBL" id="AF128846">
    <property type="protein sequence ID" value="AAF18304.1"/>
    <property type="molecule type" value="mRNA"/>
</dbReference>
<dbReference type="EMBL" id="AF128847">
    <property type="protein sequence ID" value="AAF18305.1"/>
    <property type="molecule type" value="mRNA"/>
</dbReference>
<dbReference type="EMBL" id="AF128848">
    <property type="protein sequence ID" value="AAF18306.1"/>
    <property type="molecule type" value="Genomic_DNA"/>
</dbReference>
<dbReference type="EMBL" id="AK313832">
    <property type="status" value="NOT_ANNOTATED_CDS"/>
    <property type="molecule type" value="mRNA"/>
</dbReference>
<dbReference type="EMBL" id="AC004976">
    <property type="status" value="NOT_ANNOTATED_CDS"/>
    <property type="molecule type" value="Genomic_DNA"/>
</dbReference>
<dbReference type="EMBL" id="AC006022">
    <property type="protein sequence ID" value="AAD04723.1"/>
    <property type="molecule type" value="Genomic_DNA"/>
</dbReference>
<dbReference type="EMBL" id="BC033813">
    <property type="protein sequence ID" value="AAH33813.1"/>
    <property type="molecule type" value="mRNA"/>
</dbReference>
<dbReference type="EMBL" id="BC106902">
    <property type="protein sequence ID" value="AAI06903.1"/>
    <property type="molecule type" value="mRNA"/>
</dbReference>
<dbReference type="EMBL" id="BC106903">
    <property type="protein sequence ID" value="AAI06904.1"/>
    <property type="molecule type" value="mRNA"/>
</dbReference>
<dbReference type="EMBL" id="AB041362">
    <property type="protein sequence ID" value="BAA94451.1"/>
    <property type="molecule type" value="Genomic_DNA"/>
</dbReference>
<dbReference type="CCDS" id="CCDS5430.1">
    <molecule id="O95050-1"/>
</dbReference>
<dbReference type="CCDS" id="CCDS56479.1">
    <molecule id="O95050-2"/>
</dbReference>
<dbReference type="RefSeq" id="NP_001186148.1">
    <molecule id="O95050-2"/>
    <property type="nucleotide sequence ID" value="NM_001199219.2"/>
</dbReference>
<dbReference type="RefSeq" id="NP_006765.4">
    <molecule id="O95050-1"/>
    <property type="nucleotide sequence ID" value="NM_006774.4"/>
</dbReference>
<dbReference type="PDB" id="2A14">
    <property type="method" value="X-ray"/>
    <property type="resolution" value="1.70 A"/>
    <property type="chains" value="A=1-263"/>
</dbReference>
<dbReference type="PDBsum" id="2A14"/>
<dbReference type="SMR" id="O95050"/>
<dbReference type="BioGRID" id="116355">
    <property type="interactions" value="4"/>
</dbReference>
<dbReference type="FunCoup" id="O95050">
    <property type="interactions" value="203"/>
</dbReference>
<dbReference type="IntAct" id="O95050">
    <property type="interactions" value="2"/>
</dbReference>
<dbReference type="STRING" id="9606.ENSP00000013222"/>
<dbReference type="BindingDB" id="O95050"/>
<dbReference type="ChEMBL" id="CHEMBL2131"/>
<dbReference type="iPTMnet" id="O95050"/>
<dbReference type="PhosphoSitePlus" id="O95050"/>
<dbReference type="BioMuta" id="INMT"/>
<dbReference type="jPOST" id="O95050"/>
<dbReference type="MassIVE" id="O95050"/>
<dbReference type="PaxDb" id="9606-ENSP00000013222"/>
<dbReference type="PeptideAtlas" id="O95050"/>
<dbReference type="ProteomicsDB" id="50633">
    <molecule id="O95050-1"/>
</dbReference>
<dbReference type="ProteomicsDB" id="7318"/>
<dbReference type="Antibodypedia" id="35018">
    <property type="antibodies" value="149 antibodies from 22 providers"/>
</dbReference>
<dbReference type="DNASU" id="11185"/>
<dbReference type="Ensembl" id="ENST00000013222.5">
    <molecule id="O95050-1"/>
    <property type="protein sequence ID" value="ENSP00000013222.5"/>
    <property type="gene ID" value="ENSG00000241644.2"/>
</dbReference>
<dbReference type="Ensembl" id="ENST00000409539.1">
    <molecule id="O95050-2"/>
    <property type="protein sequence ID" value="ENSP00000386961.1"/>
    <property type="gene ID" value="ENSG00000241644.2"/>
</dbReference>
<dbReference type="GeneID" id="11185"/>
<dbReference type="KEGG" id="hsa:11185"/>
<dbReference type="MANE-Select" id="ENST00000013222.5">
    <property type="protein sequence ID" value="ENSP00000013222.5"/>
    <property type="RefSeq nucleotide sequence ID" value="NM_006774.5"/>
    <property type="RefSeq protein sequence ID" value="NP_006765.4"/>
</dbReference>
<dbReference type="UCSC" id="uc003tbs.1">
    <molecule id="O95050-1"/>
    <property type="organism name" value="human"/>
</dbReference>
<dbReference type="AGR" id="HGNC:6069"/>
<dbReference type="CTD" id="11185"/>
<dbReference type="DisGeNET" id="11185"/>
<dbReference type="GeneCards" id="INMT"/>
<dbReference type="HGNC" id="HGNC:6069">
    <property type="gene designation" value="INMT"/>
</dbReference>
<dbReference type="HPA" id="ENSG00000241644">
    <property type="expression patterns" value="Tissue enhanced (lung)"/>
</dbReference>
<dbReference type="MIM" id="604854">
    <property type="type" value="gene"/>
</dbReference>
<dbReference type="neXtProt" id="NX_O95050"/>
<dbReference type="OpenTargets" id="ENSG00000241644"/>
<dbReference type="PharmGKB" id="PA403"/>
<dbReference type="VEuPathDB" id="HostDB:ENSG00000241644"/>
<dbReference type="eggNOG" id="KOG4564">
    <property type="taxonomic scope" value="Eukaryota"/>
</dbReference>
<dbReference type="GeneTree" id="ENSGT00390000011708"/>
<dbReference type="HOGENOM" id="CLU_082526_2_0_1"/>
<dbReference type="InParanoid" id="O95050"/>
<dbReference type="OMA" id="KFYLECL"/>
<dbReference type="OrthoDB" id="10050085at2759"/>
<dbReference type="PAN-GO" id="O95050">
    <property type="GO annotations" value="3 GO annotations based on evolutionary models"/>
</dbReference>
<dbReference type="PhylomeDB" id="O95050"/>
<dbReference type="TreeFam" id="TF313114"/>
<dbReference type="BioCyc" id="MetaCyc:HS00305-MONOMER"/>
<dbReference type="PathwayCommons" id="O95050"/>
<dbReference type="Reactome" id="R-HSA-2408552">
    <property type="pathway name" value="Methylation of MeSeH for excretion"/>
</dbReference>
<dbReference type="SABIO-RK" id="O95050"/>
<dbReference type="SignaLink" id="O95050"/>
<dbReference type="BioGRID-ORCS" id="11185">
    <property type="hits" value="9 hits in 1153 CRISPR screens"/>
</dbReference>
<dbReference type="ChiTaRS" id="INMT">
    <property type="organism name" value="human"/>
</dbReference>
<dbReference type="EvolutionaryTrace" id="O95050"/>
<dbReference type="GenomeRNAi" id="11185"/>
<dbReference type="Pharos" id="O95050">
    <property type="development level" value="Tchem"/>
</dbReference>
<dbReference type="PRO" id="PR:O95050"/>
<dbReference type="Proteomes" id="UP000005640">
    <property type="component" value="Chromosome 7"/>
</dbReference>
<dbReference type="RNAct" id="O95050">
    <property type="molecule type" value="protein"/>
</dbReference>
<dbReference type="Bgee" id="ENSG00000241644">
    <property type="expression patterns" value="Expressed in right lung and 126 other cell types or tissues"/>
</dbReference>
<dbReference type="GO" id="GO:0005829">
    <property type="term" value="C:cytosol"/>
    <property type="evidence" value="ECO:0000314"/>
    <property type="project" value="UniProtKB"/>
</dbReference>
<dbReference type="GO" id="GO:0030748">
    <property type="term" value="F:amine N-methyltransferase activity"/>
    <property type="evidence" value="ECO:0000314"/>
    <property type="project" value="UniProtKB"/>
</dbReference>
<dbReference type="GO" id="GO:0008170">
    <property type="term" value="F:N-methyltransferase activity"/>
    <property type="evidence" value="ECO:0000318"/>
    <property type="project" value="GO_Central"/>
</dbReference>
<dbReference type="GO" id="GO:0004790">
    <property type="term" value="F:thioether S-methyltransferase activity"/>
    <property type="evidence" value="ECO:0007669"/>
    <property type="project" value="UniProtKB-EC"/>
</dbReference>
<dbReference type="GO" id="GO:0009308">
    <property type="term" value="P:amine metabolic process"/>
    <property type="evidence" value="ECO:0000314"/>
    <property type="project" value="UniProtKB"/>
</dbReference>
<dbReference type="GO" id="GO:0032259">
    <property type="term" value="P:methylation"/>
    <property type="evidence" value="ECO:0000314"/>
    <property type="project" value="UniProtKB"/>
</dbReference>
<dbReference type="GO" id="GO:0009636">
    <property type="term" value="P:response to toxic substance"/>
    <property type="evidence" value="ECO:0007669"/>
    <property type="project" value="UniProtKB-KW"/>
</dbReference>
<dbReference type="FunFam" id="3.40.50.150:FF:000065">
    <property type="entry name" value="Phenylethanolamine N-methyltransferase"/>
    <property type="match status" value="1"/>
</dbReference>
<dbReference type="Gene3D" id="3.40.50.150">
    <property type="entry name" value="Vaccinia Virus protein VP39"/>
    <property type="match status" value="1"/>
</dbReference>
<dbReference type="InterPro" id="IPR025820">
    <property type="entry name" value="NNMT/PNMT/TEMT_CS"/>
</dbReference>
<dbReference type="InterPro" id="IPR000940">
    <property type="entry name" value="NNMT_TEMT_trans"/>
</dbReference>
<dbReference type="InterPro" id="IPR053384">
    <property type="entry name" value="SAM-dep_methyltransferase"/>
</dbReference>
<dbReference type="InterPro" id="IPR029063">
    <property type="entry name" value="SAM-dependent_MTases_sf"/>
</dbReference>
<dbReference type="NCBIfam" id="NF041360">
    <property type="entry name" value="GntF_guanitoxin"/>
    <property type="match status" value="1"/>
</dbReference>
<dbReference type="PANTHER" id="PTHR10867:SF33">
    <property type="entry name" value="INDOLETHYLAMINE N-METHYLTRANSFERASE"/>
    <property type="match status" value="1"/>
</dbReference>
<dbReference type="PANTHER" id="PTHR10867">
    <property type="entry name" value="NNMT/PNMT/TEMT FAMILY MEMBER"/>
    <property type="match status" value="1"/>
</dbReference>
<dbReference type="Pfam" id="PF01234">
    <property type="entry name" value="NNMT_PNMT_TEMT"/>
    <property type="match status" value="1"/>
</dbReference>
<dbReference type="PIRSF" id="PIRSF000384">
    <property type="entry name" value="PNMTase"/>
    <property type="match status" value="1"/>
</dbReference>
<dbReference type="SUPFAM" id="SSF53335">
    <property type="entry name" value="S-adenosyl-L-methionine-dependent methyltransferases"/>
    <property type="match status" value="1"/>
</dbReference>
<dbReference type="PROSITE" id="PS01100">
    <property type="entry name" value="NNMT_PNMT_TEMT"/>
    <property type="match status" value="1"/>
</dbReference>
<dbReference type="PROSITE" id="PS51681">
    <property type="entry name" value="SAM_MT_NNMT_PNMT_TEMT"/>
    <property type="match status" value="1"/>
</dbReference>